<name>LEUD_CALS8</name>
<protein>
    <recommendedName>
        <fullName evidence="1">3-isopropylmalate dehydratase small subunit</fullName>
        <ecNumber evidence="1">4.2.1.33</ecNumber>
    </recommendedName>
    <alternativeName>
        <fullName evidence="1">Alpha-IPM isomerase</fullName>
        <shortName evidence="1">IPMI</shortName>
    </alternativeName>
    <alternativeName>
        <fullName evidence="1">Isopropylmalate isomerase</fullName>
    </alternativeName>
</protein>
<feature type="chain" id="PRO_1000072963" description="3-isopropylmalate dehydratase small subunit">
    <location>
        <begin position="1"/>
        <end position="173"/>
    </location>
</feature>
<evidence type="ECO:0000255" key="1">
    <source>
        <dbReference type="HAMAP-Rule" id="MF_01032"/>
    </source>
</evidence>
<dbReference type="EC" id="4.2.1.33" evidence="1"/>
<dbReference type="EMBL" id="CP000679">
    <property type="protein sequence ID" value="ABP66934.1"/>
    <property type="molecule type" value="Genomic_DNA"/>
</dbReference>
<dbReference type="RefSeq" id="WP_011916869.1">
    <property type="nucleotide sequence ID" value="NC_009437.1"/>
</dbReference>
<dbReference type="SMR" id="A4XJ49"/>
<dbReference type="STRING" id="351627.Csac_1332"/>
<dbReference type="KEGG" id="csc:Csac_1332"/>
<dbReference type="eggNOG" id="COG0066">
    <property type="taxonomic scope" value="Bacteria"/>
</dbReference>
<dbReference type="HOGENOM" id="CLU_081378_1_1_9"/>
<dbReference type="OrthoDB" id="9777465at2"/>
<dbReference type="UniPathway" id="UPA00048">
    <property type="reaction ID" value="UER00071"/>
</dbReference>
<dbReference type="Proteomes" id="UP000000256">
    <property type="component" value="Chromosome"/>
</dbReference>
<dbReference type="GO" id="GO:0003861">
    <property type="term" value="F:3-isopropylmalate dehydratase activity"/>
    <property type="evidence" value="ECO:0007669"/>
    <property type="project" value="UniProtKB-UniRule"/>
</dbReference>
<dbReference type="GO" id="GO:0009098">
    <property type="term" value="P:L-leucine biosynthetic process"/>
    <property type="evidence" value="ECO:0007669"/>
    <property type="project" value="UniProtKB-UniRule"/>
</dbReference>
<dbReference type="CDD" id="cd01577">
    <property type="entry name" value="IPMI_Swivel"/>
    <property type="match status" value="1"/>
</dbReference>
<dbReference type="FunFam" id="3.20.19.10:FF:000007">
    <property type="entry name" value="Isopropylmalate/citramalate isomerase small subunit"/>
    <property type="match status" value="1"/>
</dbReference>
<dbReference type="Gene3D" id="3.20.19.10">
    <property type="entry name" value="Aconitase, domain 4"/>
    <property type="match status" value="1"/>
</dbReference>
<dbReference type="HAMAP" id="MF_01032">
    <property type="entry name" value="LeuD_type2"/>
    <property type="match status" value="1"/>
</dbReference>
<dbReference type="InterPro" id="IPR015928">
    <property type="entry name" value="Aconitase/3IPM_dehydase_swvl"/>
</dbReference>
<dbReference type="InterPro" id="IPR000573">
    <property type="entry name" value="AconitaseA/IPMdHydase_ssu_swvl"/>
</dbReference>
<dbReference type="InterPro" id="IPR033940">
    <property type="entry name" value="IPMI_Swivel"/>
</dbReference>
<dbReference type="InterPro" id="IPR050075">
    <property type="entry name" value="LeuD"/>
</dbReference>
<dbReference type="InterPro" id="IPR011824">
    <property type="entry name" value="LeuD/DmdB_bac"/>
</dbReference>
<dbReference type="InterPro" id="IPR011827">
    <property type="entry name" value="LeuD_type2/HacB/DmdB"/>
</dbReference>
<dbReference type="NCBIfam" id="TIGR02084">
    <property type="entry name" value="leud"/>
    <property type="match status" value="1"/>
</dbReference>
<dbReference type="NCBIfam" id="TIGR02087">
    <property type="entry name" value="LEUD_arch"/>
    <property type="match status" value="1"/>
</dbReference>
<dbReference type="PANTHER" id="PTHR43345:SF2">
    <property type="entry name" value="3-ISOPROPYLMALATE DEHYDRATASE SMALL SUBUNIT 1"/>
    <property type="match status" value="1"/>
</dbReference>
<dbReference type="PANTHER" id="PTHR43345">
    <property type="entry name" value="3-ISOPROPYLMALATE DEHYDRATASE SMALL SUBUNIT 2-RELATED-RELATED"/>
    <property type="match status" value="1"/>
</dbReference>
<dbReference type="Pfam" id="PF00694">
    <property type="entry name" value="Aconitase_C"/>
    <property type="match status" value="1"/>
</dbReference>
<dbReference type="SUPFAM" id="SSF52016">
    <property type="entry name" value="LeuD/IlvD-like"/>
    <property type="match status" value="1"/>
</dbReference>
<keyword id="KW-0028">Amino-acid biosynthesis</keyword>
<keyword id="KW-0100">Branched-chain amino acid biosynthesis</keyword>
<keyword id="KW-0432">Leucine biosynthesis</keyword>
<keyword id="KW-0456">Lyase</keyword>
<reference key="1">
    <citation type="submission" date="2007-04" db="EMBL/GenBank/DDBJ databases">
        <title>Genome sequence of the thermophilic hydrogen-producing bacterium Caldicellulosiruptor saccharolyticus DSM 8903.</title>
        <authorList>
            <person name="Copeland A."/>
            <person name="Lucas S."/>
            <person name="Lapidus A."/>
            <person name="Barry K."/>
            <person name="Detter J.C."/>
            <person name="Glavina del Rio T."/>
            <person name="Hammon N."/>
            <person name="Israni S."/>
            <person name="Dalin E."/>
            <person name="Tice H."/>
            <person name="Pitluck S."/>
            <person name="Kiss H."/>
            <person name="Brettin T."/>
            <person name="Bruce D."/>
            <person name="Han C."/>
            <person name="Schmutz J."/>
            <person name="Larimer F."/>
            <person name="Land M."/>
            <person name="Hauser L."/>
            <person name="Kyrpides N."/>
            <person name="Lykidis A."/>
            <person name="van de Werken H.J.G."/>
            <person name="Verhaart M.R.A."/>
            <person name="VanFossen A.L."/>
            <person name="Lewis D.L."/>
            <person name="Nichols J.D."/>
            <person name="Goorissen H.P."/>
            <person name="van Niel E.W.J."/>
            <person name="Stams F.J.M."/>
            <person name="Willquist K.U."/>
            <person name="Ward D.E."/>
            <person name="van der Oost J."/>
            <person name="Kelly R.M."/>
            <person name="Kengen S.M.W."/>
            <person name="Richardson P."/>
        </authorList>
    </citation>
    <scope>NUCLEOTIDE SEQUENCE [LARGE SCALE GENOMIC DNA]</scope>
    <source>
        <strain>ATCC 43494 / DSM 8903 / Tp8T 6331</strain>
    </source>
</reference>
<sequence length="173" mass="19213">MIFKGKAHKYYDNIDTDVIIPARYLNTSDPAELAKHCLEDLDKEFVNKVKKGDILVAGRNFGCGSSREHAPIAIKACGVSCVIAKSFARIFYRNAINIGLPIVECEEAVDGIEAGDEVEVDLVKGIIKNLTKNKEFKAKPFPEFMQNIMKAGGLIEFVKGELKKDAWDSCNSW</sequence>
<comment type="function">
    <text evidence="1">Catalyzes the isomerization between 2-isopropylmalate and 3-isopropylmalate, via the formation of 2-isopropylmaleate.</text>
</comment>
<comment type="catalytic activity">
    <reaction evidence="1">
        <text>(2R,3S)-3-isopropylmalate = (2S)-2-isopropylmalate</text>
        <dbReference type="Rhea" id="RHEA:32287"/>
        <dbReference type="ChEBI" id="CHEBI:1178"/>
        <dbReference type="ChEBI" id="CHEBI:35121"/>
        <dbReference type="EC" id="4.2.1.33"/>
    </reaction>
</comment>
<comment type="pathway">
    <text evidence="1">Amino-acid biosynthesis; L-leucine biosynthesis; L-leucine from 3-methyl-2-oxobutanoate: step 2/4.</text>
</comment>
<comment type="subunit">
    <text evidence="1">Heterodimer of LeuC and LeuD.</text>
</comment>
<comment type="similarity">
    <text evidence="1">Belongs to the LeuD family. LeuD type 2 subfamily.</text>
</comment>
<organism>
    <name type="scientific">Caldicellulosiruptor saccharolyticus (strain ATCC 43494 / DSM 8903 / Tp8T 6331)</name>
    <dbReference type="NCBI Taxonomy" id="351627"/>
    <lineage>
        <taxon>Bacteria</taxon>
        <taxon>Bacillati</taxon>
        <taxon>Bacillota</taxon>
        <taxon>Bacillota incertae sedis</taxon>
        <taxon>Caldicellulosiruptorales</taxon>
        <taxon>Caldicellulosiruptoraceae</taxon>
        <taxon>Caldicellulosiruptor</taxon>
    </lineage>
</organism>
<accession>A4XJ49</accession>
<proteinExistence type="inferred from homology"/>
<gene>
    <name evidence="1" type="primary">leuD</name>
    <name type="ordered locus">Csac_1332</name>
</gene>